<feature type="chain" id="PRO_0000185512" description="Ceramide synthase 4">
    <location>
        <begin position="1"/>
        <end position="394"/>
    </location>
</feature>
<feature type="topological domain" description="Lumenal" evidence="16">
    <location>
        <begin position="1"/>
        <end position="31"/>
    </location>
</feature>
<feature type="transmembrane region" description="Helical" evidence="2">
    <location>
        <begin position="32"/>
        <end position="52"/>
    </location>
</feature>
<feature type="transmembrane region" description="Helical" evidence="2">
    <location>
        <begin position="140"/>
        <end position="160"/>
    </location>
</feature>
<feature type="transmembrane region" description="Helical" evidence="2">
    <location>
        <begin position="179"/>
        <end position="199"/>
    </location>
</feature>
<feature type="transmembrane region" description="Helical" evidence="2">
    <location>
        <begin position="209"/>
        <end position="229"/>
    </location>
</feature>
<feature type="transmembrane region" description="Helical" evidence="2">
    <location>
        <begin position="260"/>
        <end position="280"/>
    </location>
</feature>
<feature type="transmembrane region" description="Helical" evidence="2">
    <location>
        <begin position="304"/>
        <end position="324"/>
    </location>
</feature>
<feature type="topological domain" description="Cytoplasmic" evidence="15">
    <location>
        <begin position="325"/>
        <end position="394"/>
    </location>
</feature>
<feature type="domain" description="TLC" evidence="3">
    <location>
        <begin position="131"/>
        <end position="332"/>
    </location>
</feature>
<feature type="region of interest" description="Homeobox-like" evidence="14">
    <location>
        <begin position="67"/>
        <end position="128"/>
    </location>
</feature>
<feature type="region of interest" description="Disordered" evidence="4">
    <location>
        <begin position="341"/>
        <end position="394"/>
    </location>
</feature>
<feature type="short sequence motif" description="Last loop motif" evidence="10">
    <location>
        <begin position="291"/>
        <end position="301"/>
    </location>
</feature>
<feature type="modified residue" description="Phosphoserine" evidence="1">
    <location>
        <position position="342"/>
    </location>
</feature>
<feature type="modified residue" description="Phosphoserine" evidence="1">
    <location>
        <position position="349"/>
    </location>
</feature>
<feature type="modified residue" description="Phosphoserine" evidence="1">
    <location>
        <position position="350"/>
    </location>
</feature>
<feature type="glycosylation site" description="N-linked (GlcNAc...) asparagine" evidence="2">
    <location>
        <position position="19"/>
    </location>
</feature>
<feature type="sequence variant" id="VAR_034065" description="In dbSNP:rs17159388.">
    <original>R</original>
    <variation>Q</variation>
    <location>
        <position position="119"/>
    </location>
</feature>
<feature type="sequence variant" id="VAR_019556" description="In dbSNP:rs2288413.">
    <original>G</original>
    <variation>S</variation>
    <location>
        <position position="301"/>
    </location>
</feature>
<feature type="sequence variant" id="VAR_060263" description="In dbSNP:rs17160348." evidence="5 6">
    <original>A</original>
    <variation>V</variation>
    <location>
        <position position="353"/>
    </location>
</feature>
<feature type="sequence variant" id="VAR_019557" description="In dbSNP:rs36259." evidence="12">
    <original>A</original>
    <variation>T</variation>
    <location>
        <position position="366"/>
    </location>
</feature>
<feature type="sequence variant" id="VAR_060264" description="In dbSNP:rs17160349." evidence="5 6">
    <original>R</original>
    <variation>Q</variation>
    <location>
        <position position="379"/>
    </location>
</feature>
<feature type="mutagenesis site" description="Altered specificity toward acyl donor; generates C24 ceramides instead of C18-C22-ceramides." evidence="10">
    <original>ESISNRGP</original>
    <variation>YPLELYPA</variation>
    <location>
        <begin position="291"/>
        <end position="298"/>
    </location>
</feature>
<feature type="mutagenesis site" description="Decreased phosphorylation." evidence="9">
    <original>SDVEESDSS</original>
    <variation>ADVEEADAA</variation>
    <location>
        <begin position="342"/>
        <end position="350"/>
    </location>
</feature>
<proteinExistence type="evidence at protein level"/>
<evidence type="ECO:0000250" key="1">
    <source>
        <dbReference type="UniProtKB" id="Q9D6J1"/>
    </source>
</evidence>
<evidence type="ECO:0000255" key="2"/>
<evidence type="ECO:0000255" key="3">
    <source>
        <dbReference type="PROSITE-ProRule" id="PRU00205"/>
    </source>
</evidence>
<evidence type="ECO:0000256" key="4">
    <source>
        <dbReference type="SAM" id="MobiDB-lite"/>
    </source>
</evidence>
<evidence type="ECO:0000269" key="5">
    <source>
    </source>
</evidence>
<evidence type="ECO:0000269" key="6">
    <source>
    </source>
</evidence>
<evidence type="ECO:0000269" key="7">
    <source>
    </source>
</evidence>
<evidence type="ECO:0000269" key="8">
    <source>
    </source>
</evidence>
<evidence type="ECO:0000269" key="9">
    <source>
    </source>
</evidence>
<evidence type="ECO:0000269" key="10">
    <source>
    </source>
</evidence>
<evidence type="ECO:0000269" key="11">
    <source>
    </source>
</evidence>
<evidence type="ECO:0000269" key="12">
    <source ref="3"/>
</evidence>
<evidence type="ECO:0000303" key="13">
    <source>
    </source>
</evidence>
<evidence type="ECO:0000305" key="14"/>
<evidence type="ECO:0000305" key="15">
    <source>
    </source>
</evidence>
<evidence type="ECO:0000305" key="16">
    <source>
    </source>
</evidence>
<evidence type="ECO:0000312" key="17">
    <source>
        <dbReference type="HGNC" id="HGNC:23747"/>
    </source>
</evidence>
<organism>
    <name type="scientific">Homo sapiens</name>
    <name type="common">Human</name>
    <dbReference type="NCBI Taxonomy" id="9606"/>
    <lineage>
        <taxon>Eukaryota</taxon>
        <taxon>Metazoa</taxon>
        <taxon>Chordata</taxon>
        <taxon>Craniata</taxon>
        <taxon>Vertebrata</taxon>
        <taxon>Euteleostomi</taxon>
        <taxon>Mammalia</taxon>
        <taxon>Eutheria</taxon>
        <taxon>Euarchontoglires</taxon>
        <taxon>Primates</taxon>
        <taxon>Haplorrhini</taxon>
        <taxon>Catarrhini</taxon>
        <taxon>Hominidae</taxon>
        <taxon>Homo</taxon>
    </lineage>
</organism>
<comment type="function">
    <text evidence="7 8 9 10 11">Ceramide synthase that catalyzes formation of ceramide from sphinganine and acyl-CoA substrates, with high selectivity toward long and very-long chains (C18:0-C22:0) as acyl donor.</text>
</comment>
<comment type="catalytic activity">
    <reaction evidence="7 8 10 11">
        <text>sphinganine + octadecanoyl-CoA = N-(octadecanoyl)-sphinganine + CoA + H(+)</text>
        <dbReference type="Rhea" id="RHEA:36547"/>
        <dbReference type="ChEBI" id="CHEBI:15378"/>
        <dbReference type="ChEBI" id="CHEBI:57287"/>
        <dbReference type="ChEBI" id="CHEBI:57394"/>
        <dbReference type="ChEBI" id="CHEBI:57817"/>
        <dbReference type="ChEBI" id="CHEBI:67033"/>
    </reaction>
    <physiologicalReaction direction="left-to-right" evidence="7 8 10 11">
        <dbReference type="Rhea" id="RHEA:36548"/>
    </physiologicalReaction>
</comment>
<comment type="catalytic activity">
    <reaction evidence="7 9">
        <text>eicosanoyl-CoA + sphinganine = N-eicosanoylsphinganine + CoA + H(+)</text>
        <dbReference type="Rhea" id="RHEA:36555"/>
        <dbReference type="ChEBI" id="CHEBI:15378"/>
        <dbReference type="ChEBI" id="CHEBI:57287"/>
        <dbReference type="ChEBI" id="CHEBI:57380"/>
        <dbReference type="ChEBI" id="CHEBI:57817"/>
        <dbReference type="ChEBI" id="CHEBI:67027"/>
    </reaction>
    <physiologicalReaction direction="left-to-right" evidence="7 9">
        <dbReference type="Rhea" id="RHEA:36556"/>
    </physiologicalReaction>
</comment>
<comment type="catalytic activity">
    <reaction evidence="1">
        <text>docosanoyl-CoA + sphinganine = N-docosanoylsphinganine + CoA + H(+)</text>
        <dbReference type="Rhea" id="RHEA:36535"/>
        <dbReference type="ChEBI" id="CHEBI:15378"/>
        <dbReference type="ChEBI" id="CHEBI:57287"/>
        <dbReference type="ChEBI" id="CHEBI:57817"/>
        <dbReference type="ChEBI" id="CHEBI:65059"/>
        <dbReference type="ChEBI" id="CHEBI:67021"/>
    </reaction>
    <physiologicalReaction direction="left-to-right" evidence="1">
        <dbReference type="Rhea" id="RHEA:36536"/>
    </physiologicalReaction>
</comment>
<comment type="catalytic activity">
    <reaction evidence="11">
        <text>tetracosanoyl-CoA + sphinganine = N-tetracosanoylsphinganine + CoA + H(+)</text>
        <dbReference type="Rhea" id="RHEA:33591"/>
        <dbReference type="ChEBI" id="CHEBI:15378"/>
        <dbReference type="ChEBI" id="CHEBI:52961"/>
        <dbReference type="ChEBI" id="CHEBI:57287"/>
        <dbReference type="ChEBI" id="CHEBI:57817"/>
        <dbReference type="ChEBI" id="CHEBI:65052"/>
    </reaction>
    <physiologicalReaction direction="left-to-right" evidence="11">
        <dbReference type="Rhea" id="RHEA:33592"/>
    </physiologicalReaction>
</comment>
<comment type="catalytic activity">
    <reaction evidence="1">
        <text>hexacosanoyl-CoA + sphinganine = N-hexacosanoylsphinganine + CoA + H(+)</text>
        <dbReference type="Rhea" id="RHEA:33351"/>
        <dbReference type="ChEBI" id="CHEBI:15378"/>
        <dbReference type="ChEBI" id="CHEBI:52962"/>
        <dbReference type="ChEBI" id="CHEBI:57287"/>
        <dbReference type="ChEBI" id="CHEBI:57817"/>
        <dbReference type="ChEBI" id="CHEBI:64868"/>
    </reaction>
    <physiologicalReaction direction="left-to-right" evidence="1">
        <dbReference type="Rhea" id="RHEA:33352"/>
    </physiologicalReaction>
</comment>
<comment type="catalytic activity">
    <reaction evidence="1">
        <text>a fatty acyl-CoA + sphing-4-enine = an N-acylsphing-4-enine + CoA + H(+)</text>
        <dbReference type="Rhea" id="RHEA:23768"/>
        <dbReference type="ChEBI" id="CHEBI:15378"/>
        <dbReference type="ChEBI" id="CHEBI:52639"/>
        <dbReference type="ChEBI" id="CHEBI:57287"/>
        <dbReference type="ChEBI" id="CHEBI:57756"/>
        <dbReference type="ChEBI" id="CHEBI:77636"/>
        <dbReference type="EC" id="2.3.1.24"/>
    </reaction>
    <physiologicalReaction direction="left-to-right" evidence="1">
        <dbReference type="Rhea" id="RHEA:23769"/>
    </physiologicalReaction>
</comment>
<comment type="catalytic activity">
    <reaction evidence="1">
        <text>sphing-4-enine + octadecanoyl-CoA = N-octadecanoylsphing-4-enine + CoA + H(+)</text>
        <dbReference type="Rhea" id="RHEA:36691"/>
        <dbReference type="ChEBI" id="CHEBI:15378"/>
        <dbReference type="ChEBI" id="CHEBI:57287"/>
        <dbReference type="ChEBI" id="CHEBI:57394"/>
        <dbReference type="ChEBI" id="CHEBI:57756"/>
        <dbReference type="ChEBI" id="CHEBI:72961"/>
    </reaction>
    <physiologicalReaction direction="left-to-right" evidence="1">
        <dbReference type="Rhea" id="RHEA:36692"/>
    </physiologicalReaction>
</comment>
<comment type="catalytic activity">
    <reaction evidence="8">
        <text>hexadecasphinganine + octadecanoyl-CoA = N-octadecanoylhexadecasphinganine + CoA + H(+)</text>
        <dbReference type="Rhea" id="RHEA:43044"/>
        <dbReference type="ChEBI" id="CHEBI:15378"/>
        <dbReference type="ChEBI" id="CHEBI:57287"/>
        <dbReference type="ChEBI" id="CHEBI:57394"/>
        <dbReference type="ChEBI" id="CHEBI:71009"/>
        <dbReference type="ChEBI" id="CHEBI:82811"/>
    </reaction>
    <physiologicalReaction direction="left-to-right" evidence="8">
        <dbReference type="Rhea" id="RHEA:43045"/>
    </physiologicalReaction>
</comment>
<comment type="biophysicochemical properties">
    <kinetics>
        <KM evidence="7">1.8 uM for sphinganine (with octadecanoyl-CoA as substrate)</KM>
        <KM evidence="7">1.8 uM for sphinganine (with eicosanoyl-CoA as substrate)</KM>
    </kinetics>
</comment>
<comment type="pathway">
    <text evidence="7 8 9 10">Lipid metabolism; sphingolipid metabolism.</text>
</comment>
<comment type="interaction">
    <interactant intactId="EBI-2622997">
        <id>Q9HA82</id>
    </interactant>
    <interactant intactId="EBI-12062109">
        <id>Q86Z23</id>
        <label>C1QL4</label>
    </interactant>
    <organismsDiffer>false</organismsDiffer>
    <experiments>3</experiments>
</comment>
<comment type="interaction">
    <interactant intactId="EBI-2622997">
        <id>Q9HA82</id>
    </interactant>
    <interactant intactId="EBI-10271156">
        <id>Q8NHW4</id>
        <label>CCL4L2</label>
    </interactant>
    <organismsDiffer>false</organismsDiffer>
    <experiments>3</experiments>
</comment>
<comment type="interaction">
    <interactant intactId="EBI-2622997">
        <id>Q9HA82</id>
    </interactant>
    <interactant intactId="EBI-11996768">
        <id>Q8NC01</id>
        <label>CLEC1A</label>
    </interactant>
    <organismsDiffer>false</organismsDiffer>
    <experiments>3</experiments>
</comment>
<comment type="interaction">
    <interactant intactId="EBI-2622997">
        <id>Q9HA82</id>
    </interactant>
    <interactant intactId="EBI-12211159">
        <id>P29400-2</id>
        <label>COL4A5</label>
    </interactant>
    <organismsDiffer>false</organismsDiffer>
    <experiments>3</experiments>
</comment>
<comment type="interaction">
    <interactant intactId="EBI-2622997">
        <id>Q9HA82</id>
    </interactant>
    <interactant intactId="EBI-12019274">
        <id>Q4LDR2</id>
        <label>CTXN3</label>
    </interactant>
    <organismsDiffer>false</organismsDiffer>
    <experiments>3</experiments>
</comment>
<comment type="interaction">
    <interactant intactId="EBI-2622997">
        <id>Q9HA82</id>
    </interactant>
    <interactant intactId="EBI-1046040">
        <id>P00387</id>
        <label>CYB5R3</label>
    </interactant>
    <organismsDiffer>false</organismsDiffer>
    <experiments>3</experiments>
</comment>
<comment type="interaction">
    <interactant intactId="EBI-2622997">
        <id>Q9HA82</id>
    </interactant>
    <interactant intactId="EBI-489887">
        <id>P50402</id>
        <label>EMD</label>
    </interactant>
    <organismsDiffer>false</organismsDiffer>
    <experiments>3</experiments>
</comment>
<comment type="interaction">
    <interactant intactId="EBI-2622997">
        <id>Q9HA82</id>
    </interactant>
    <interactant intactId="EBI-743099">
        <id>Q969F0</id>
        <label>FATE1</label>
    </interactant>
    <organismsDiffer>false</organismsDiffer>
    <experiments>3</experiments>
</comment>
<comment type="interaction">
    <interactant intactId="EBI-2622997">
        <id>Q9HA82</id>
    </interactant>
    <interactant intactId="EBI-713304">
        <id>Q9H0Q3</id>
        <label>FXYD6</label>
    </interactant>
    <organismsDiffer>false</organismsDiffer>
    <experiments>3</experiments>
</comment>
<comment type="interaction">
    <interactant intactId="EBI-2622997">
        <id>Q9HA82</id>
    </interactant>
    <interactant intactId="EBI-11955647">
        <id>Q8TDV0</id>
        <label>GPR151</label>
    </interactant>
    <organismsDiffer>false</organismsDiffer>
    <experiments>3</experiments>
</comment>
<comment type="interaction">
    <interactant intactId="EBI-2622997">
        <id>Q9HA82</id>
    </interactant>
    <interactant intactId="EBI-725665">
        <id>Q9Y5U9</id>
        <label>IER3IP1</label>
    </interactant>
    <organismsDiffer>false</organismsDiffer>
    <experiments>3</experiments>
</comment>
<comment type="interaction">
    <interactant intactId="EBI-2622997">
        <id>Q9HA82</id>
    </interactant>
    <interactant intactId="EBI-720480">
        <id>P24593</id>
        <label>IGFBP5</label>
    </interactant>
    <organismsDiffer>false</organismsDiffer>
    <experiments>3</experiments>
</comment>
<comment type="interaction">
    <interactant intactId="EBI-2622997">
        <id>Q9HA82</id>
    </interactant>
    <interactant intactId="EBI-2568251">
        <id>P11215</id>
        <label>ITGAM</label>
    </interactant>
    <organismsDiffer>false</organismsDiffer>
    <experiments>3</experiments>
</comment>
<comment type="interaction">
    <interactant intactId="EBI-2622997">
        <id>Q9HA82</id>
    </interactant>
    <interactant intactId="EBI-10266796">
        <id>Q8N5M9</id>
        <label>JAGN1</label>
    </interactant>
    <organismsDiffer>false</organismsDiffer>
    <experiments>3</experiments>
</comment>
<comment type="interaction">
    <interactant intactId="EBI-2622997">
        <id>Q9HA82</id>
    </interactant>
    <interactant intactId="EBI-2820517">
        <id>Q8TAF8</id>
        <label>LHFPL5</label>
    </interactant>
    <organismsDiffer>false</organismsDiffer>
    <experiments>3</experiments>
</comment>
<comment type="interaction">
    <interactant intactId="EBI-2622997">
        <id>Q9HA82</id>
    </interactant>
    <interactant intactId="EBI-2808234">
        <id>P11836</id>
        <label>MS4A1</label>
    </interactant>
    <organismsDiffer>false</organismsDiffer>
    <experiments>3</experiments>
</comment>
<comment type="interaction">
    <interactant intactId="EBI-2622997">
        <id>Q9HA82</id>
    </interactant>
    <interactant intactId="EBI-2863634">
        <id>Q9UHE5</id>
        <label>NAT8</label>
    </interactant>
    <organismsDiffer>false</organismsDiffer>
    <experiments>3</experiments>
</comment>
<comment type="interaction">
    <interactant intactId="EBI-2622997">
        <id>Q9HA82</id>
    </interactant>
    <interactant intactId="EBI-721517">
        <id>Q99519</id>
        <label>NEU1</label>
    </interactant>
    <organismsDiffer>false</organismsDiffer>
    <experiments>3</experiments>
</comment>
<comment type="interaction">
    <interactant intactId="EBI-2622997">
        <id>Q9HA82</id>
    </interactant>
    <interactant intactId="EBI-608347">
        <id>Q04941</id>
        <label>PLP2</label>
    </interactant>
    <organismsDiffer>false</organismsDiffer>
    <experiments>3</experiments>
</comment>
<comment type="interaction">
    <interactant intactId="EBI-2622997">
        <id>Q9HA82</id>
    </interactant>
    <interactant intactId="EBI-8652812">
        <id>P54315</id>
        <label>PNLIPRP1</label>
    </interactant>
    <organismsDiffer>false</organismsDiffer>
    <experiments>3</experiments>
</comment>
<comment type="interaction">
    <interactant intactId="EBI-2622997">
        <id>Q9HA82</id>
    </interactant>
    <interactant intactId="EBI-742898">
        <id>P43378</id>
        <label>PTPN9</label>
    </interactant>
    <organismsDiffer>false</organismsDiffer>
    <experiments>3</experiments>
</comment>
<comment type="interaction">
    <interactant intactId="EBI-2622997">
        <id>Q9HA82</id>
    </interactant>
    <interactant intactId="EBI-2695784">
        <id>Q8TAC9</id>
        <label>SCAMP5</label>
    </interactant>
    <organismsDiffer>false</organismsDiffer>
    <experiments>3</experiments>
</comment>
<comment type="interaction">
    <interactant intactId="EBI-2622997">
        <id>Q9HA82</id>
    </interactant>
    <interactant intactId="EBI-2684237">
        <id>O00767</id>
        <label>SCD</label>
    </interactant>
    <organismsDiffer>false</organismsDiffer>
    <experiments>3</experiments>
</comment>
<comment type="interaction">
    <interactant intactId="EBI-2622997">
        <id>Q9HA82</id>
    </interactant>
    <interactant intactId="EBI-2115181">
        <id>O75920</id>
        <label>SERF1B</label>
    </interactant>
    <organismsDiffer>false</organismsDiffer>
    <experiments>3</experiments>
</comment>
<comment type="interaction">
    <interactant intactId="EBI-2622997">
        <id>Q9HA82</id>
    </interactant>
    <interactant intactId="EBI-749270">
        <id>Q8N6R1</id>
        <label>SERP2</label>
    </interactant>
    <organismsDiffer>false</organismsDiffer>
    <experiments>3</experiments>
</comment>
<comment type="interaction">
    <interactant intactId="EBI-2622997">
        <id>Q9HA82</id>
    </interactant>
    <interactant intactId="EBI-12808018">
        <id>Q9UKG4</id>
        <label>SLC13A4</label>
    </interactant>
    <organismsDiffer>false</organismsDiffer>
    <experiments>3</experiments>
</comment>
<comment type="interaction">
    <interactant intactId="EBI-2622997">
        <id>Q9HA82</id>
    </interactant>
    <interactant intactId="EBI-12870360">
        <id>P78382</id>
        <label>SLC35A1</label>
    </interactant>
    <organismsDiffer>false</organismsDiffer>
    <experiments>3</experiments>
</comment>
<comment type="interaction">
    <interactant intactId="EBI-2622997">
        <id>Q9HA82</id>
    </interactant>
    <interactant intactId="EBI-713484">
        <id>Q8N357</id>
        <label>SLC35F6</label>
    </interactant>
    <organismsDiffer>false</organismsDiffer>
    <experiments>3</experiments>
</comment>
<comment type="interaction">
    <interactant intactId="EBI-2622997">
        <id>Q9HA82</id>
    </interactant>
    <interactant intactId="EBI-4289564">
        <id>P30825</id>
        <label>SLC7A1</label>
    </interactant>
    <organismsDiffer>false</organismsDiffer>
    <experiments>3</experiments>
</comment>
<comment type="interaction">
    <interactant intactId="EBI-2622997">
        <id>Q9HA82</id>
    </interactant>
    <interactant intactId="EBI-1051936">
        <id>P58511</id>
        <label>SMIM11</label>
    </interactant>
    <organismsDiffer>false</organismsDiffer>
    <experiments>3</experiments>
</comment>
<comment type="interaction">
    <interactant intactId="EBI-2622997">
        <id>Q9HA82</id>
    </interactant>
    <interactant intactId="EBI-3221827">
        <id>O15400</id>
        <label>STX7</label>
    </interactant>
    <organismsDiffer>false</organismsDiffer>
    <experiments>3</experiments>
</comment>
<comment type="interaction">
    <interactant intactId="EBI-2622997">
        <id>Q9HA82</id>
    </interactant>
    <interactant intactId="EBI-727240">
        <id>Q9UNK0</id>
        <label>STX8</label>
    </interactant>
    <organismsDiffer>false</organismsDiffer>
    <experiments>3</experiments>
</comment>
<comment type="interaction">
    <interactant intactId="EBI-2622997">
        <id>Q9HA82</id>
    </interactant>
    <interactant intactId="EBI-10329860">
        <id>Q9Y6I9</id>
        <label>TEX264</label>
    </interactant>
    <organismsDiffer>false</organismsDiffer>
    <experiments>3</experiments>
</comment>
<comment type="interaction">
    <interactant intactId="EBI-2622997">
        <id>Q9HA82</id>
    </interactant>
    <interactant intactId="EBI-2800645">
        <id>Q96HP8</id>
        <label>TMEM176A</label>
    </interactant>
    <organismsDiffer>false</organismsDiffer>
    <experiments>3</experiments>
</comment>
<comment type="interaction">
    <interactant intactId="EBI-2622997">
        <id>Q9HA82</id>
    </interactant>
    <interactant intactId="EBI-11956809">
        <id>Q8TBM7</id>
        <label>TMEM254</label>
    </interactant>
    <organismsDiffer>false</organismsDiffer>
    <experiments>3</experiments>
</comment>
<comment type="interaction">
    <interactant intactId="EBI-2622997">
        <id>Q9HA82</id>
    </interactant>
    <interactant intactId="EBI-12878352">
        <id>A0PK05</id>
        <label>TMEM72</label>
    </interactant>
    <organismsDiffer>false</organismsDiffer>
    <experiments>3</experiments>
</comment>
<comment type="interaction">
    <interactant intactId="EBI-2622997">
        <id>Q9HA82</id>
    </interactant>
    <interactant intactId="EBI-10826510">
        <id>Q96B49</id>
        <label>TOMM6</label>
    </interactant>
    <organismsDiffer>false</organismsDiffer>
    <experiments>3</experiments>
</comment>
<comment type="interaction">
    <interactant intactId="EBI-2622997">
        <id>Q9HA82</id>
    </interactant>
    <interactant intactId="EBI-12195249">
        <id>Q5TGU0</id>
        <label>TSPO2</label>
    </interactant>
    <organismsDiffer>false</organismsDiffer>
    <experiments>3</experiments>
</comment>
<comment type="interaction">
    <interactant intactId="EBI-2622997">
        <id>Q9HA82</id>
    </interactant>
    <interactant intactId="EBI-12237619">
        <id>O75841</id>
        <label>UPK1B</label>
    </interactant>
    <organismsDiffer>false</organismsDiffer>
    <experiments>3</experiments>
</comment>
<comment type="interaction">
    <interactant intactId="EBI-2622997">
        <id>Q9HA82</id>
    </interactant>
    <interactant intactId="EBI-520113">
        <id>P63027</id>
        <label>VAMP2</label>
    </interactant>
    <organismsDiffer>false</organismsDiffer>
    <experiments>3</experiments>
</comment>
<comment type="interaction">
    <interactant intactId="EBI-2622997">
        <id>Q9HA82</id>
    </interactant>
    <interactant intactId="EBI-2857623">
        <id>Q96FB2</id>
    </interactant>
    <organismsDiffer>false</organismsDiffer>
    <experiments>3</experiments>
</comment>
<comment type="subcellular location">
    <subcellularLocation>
        <location evidence="1">Endoplasmic reticulum membrane</location>
        <topology evidence="2">Multi-pass membrane protein</topology>
    </subcellularLocation>
</comment>
<comment type="domain">
    <text evidence="10">The last loop motif confers selectivity toward stearoyl-CoA (octadecanoyl-CoA; C18:0-CoA) to behenoyl-CoA (docosanoyl-CoA; C22:0-CoA) as acyl donors.</text>
</comment>
<comment type="PTM">
    <text evidence="9">Phosphorylated at the C-terminus by CK2.</text>
</comment>
<comment type="PTM">
    <text evidence="9 10">N-glycosylated.</text>
</comment>
<comment type="caution">
    <text evidence="2">Some prediction bioinformatics tools predict the presence of a homeobox domain (By similarity). However, the domain is degenerate and residues that are important for DNA-binding are absent (By similarity).</text>
</comment>
<gene>
    <name evidence="13 17" type="primary">CERS4</name>
    <name evidence="1" type="synonym">LASS4</name>
</gene>
<dbReference type="EC" id="2.3.1.-" evidence="7 8 9 10"/>
<dbReference type="EC" id="2.3.1.24" evidence="1"/>
<dbReference type="EMBL" id="AK022151">
    <property type="protein sequence ID" value="BAB13972.1"/>
    <property type="molecule type" value="mRNA"/>
</dbReference>
<dbReference type="EMBL" id="AC022146">
    <property type="status" value="NOT_ANNOTATED_CDS"/>
    <property type="molecule type" value="Genomic_DNA"/>
</dbReference>
<dbReference type="EMBL" id="CH471139">
    <property type="protein sequence ID" value="EAW68940.1"/>
    <property type="molecule type" value="Genomic_DNA"/>
</dbReference>
<dbReference type="EMBL" id="CH471139">
    <property type="protein sequence ID" value="EAW68941.1"/>
    <property type="molecule type" value="Genomic_DNA"/>
</dbReference>
<dbReference type="EMBL" id="CH471139">
    <property type="protein sequence ID" value="EAW68942.1"/>
    <property type="molecule type" value="Genomic_DNA"/>
</dbReference>
<dbReference type="EMBL" id="CH471139">
    <property type="protein sequence ID" value="EAW68945.1"/>
    <property type="molecule type" value="Genomic_DNA"/>
</dbReference>
<dbReference type="EMBL" id="BC009828">
    <property type="protein sequence ID" value="AAH09828.1"/>
    <property type="molecule type" value="mRNA"/>
</dbReference>
<dbReference type="CCDS" id="CCDS12197.1"/>
<dbReference type="RefSeq" id="NP_078828.2">
    <property type="nucleotide sequence ID" value="NM_024552.3"/>
</dbReference>
<dbReference type="RefSeq" id="XP_011526592.1">
    <property type="nucleotide sequence ID" value="XM_011528290.3"/>
</dbReference>
<dbReference type="RefSeq" id="XP_011526593.1">
    <property type="nucleotide sequence ID" value="XM_011528291.3"/>
</dbReference>
<dbReference type="RefSeq" id="XP_011526594.1">
    <property type="nucleotide sequence ID" value="XM_011528292.2"/>
</dbReference>
<dbReference type="RefSeq" id="XP_011526595.1">
    <property type="nucleotide sequence ID" value="XM_011528293.2"/>
</dbReference>
<dbReference type="RefSeq" id="XP_011526596.1">
    <property type="nucleotide sequence ID" value="XM_011528294.2"/>
</dbReference>
<dbReference type="RefSeq" id="XP_011526597.1">
    <property type="nucleotide sequence ID" value="XM_011528295.2"/>
</dbReference>
<dbReference type="RefSeq" id="XP_016882792.1">
    <property type="nucleotide sequence ID" value="XM_017027303.1"/>
</dbReference>
<dbReference type="RefSeq" id="XP_016882793.1">
    <property type="nucleotide sequence ID" value="XM_017027304.2"/>
</dbReference>
<dbReference type="RefSeq" id="XP_016882794.1">
    <property type="nucleotide sequence ID" value="XM_017027305.2"/>
</dbReference>
<dbReference type="RefSeq" id="XP_047295390.1">
    <property type="nucleotide sequence ID" value="XM_047439434.1"/>
</dbReference>
<dbReference type="RefSeq" id="XP_047295391.1">
    <property type="nucleotide sequence ID" value="XM_047439435.1"/>
</dbReference>
<dbReference type="RefSeq" id="XP_047295392.1">
    <property type="nucleotide sequence ID" value="XM_047439436.1"/>
</dbReference>
<dbReference type="RefSeq" id="XP_047295393.1">
    <property type="nucleotide sequence ID" value="XM_047439437.1"/>
</dbReference>
<dbReference type="RefSeq" id="XP_054178119.1">
    <property type="nucleotide sequence ID" value="XM_054322144.1"/>
</dbReference>
<dbReference type="RefSeq" id="XP_054178121.1">
    <property type="nucleotide sequence ID" value="XM_054322146.1"/>
</dbReference>
<dbReference type="RefSeq" id="XP_054178122.1">
    <property type="nucleotide sequence ID" value="XM_054322147.1"/>
</dbReference>
<dbReference type="RefSeq" id="XP_054178123.1">
    <property type="nucleotide sequence ID" value="XM_054322148.1"/>
</dbReference>
<dbReference type="RefSeq" id="XP_054178124.1">
    <property type="nucleotide sequence ID" value="XM_054322149.1"/>
</dbReference>
<dbReference type="RefSeq" id="XP_054178125.1">
    <property type="nucleotide sequence ID" value="XM_054322150.1"/>
</dbReference>
<dbReference type="RefSeq" id="XP_054178126.1">
    <property type="nucleotide sequence ID" value="XM_054322151.1"/>
</dbReference>
<dbReference type="SMR" id="Q9HA82"/>
<dbReference type="BioGRID" id="122740">
    <property type="interactions" value="73"/>
</dbReference>
<dbReference type="FunCoup" id="Q9HA82">
    <property type="interactions" value="548"/>
</dbReference>
<dbReference type="IntAct" id="Q9HA82">
    <property type="interactions" value="53"/>
</dbReference>
<dbReference type="STRING" id="9606.ENSP00000251363"/>
<dbReference type="BindingDB" id="Q9HA82"/>
<dbReference type="ChEMBL" id="CHEMBL5291570"/>
<dbReference type="SwissLipids" id="SLP:000000699"/>
<dbReference type="GlyConnect" id="1106">
    <property type="glycosylation" value="3 N-Linked glycans (1 site)"/>
</dbReference>
<dbReference type="GlyCosmos" id="Q9HA82">
    <property type="glycosylation" value="1 site, 3 glycans"/>
</dbReference>
<dbReference type="GlyGen" id="Q9HA82">
    <property type="glycosylation" value="3 sites, 7 N-linked glycans (2 sites)"/>
</dbReference>
<dbReference type="iPTMnet" id="Q9HA82"/>
<dbReference type="PhosphoSitePlus" id="Q9HA82"/>
<dbReference type="SwissPalm" id="Q9HA82"/>
<dbReference type="BioMuta" id="CERS4"/>
<dbReference type="DMDM" id="296434561"/>
<dbReference type="jPOST" id="Q9HA82"/>
<dbReference type="MassIVE" id="Q9HA82"/>
<dbReference type="PaxDb" id="9606-ENSP00000251363"/>
<dbReference type="PeptideAtlas" id="Q9HA82"/>
<dbReference type="ProteomicsDB" id="81384"/>
<dbReference type="Pumba" id="Q9HA82"/>
<dbReference type="Antibodypedia" id="24821">
    <property type="antibodies" value="284 antibodies from 30 providers"/>
</dbReference>
<dbReference type="DNASU" id="79603"/>
<dbReference type="Ensembl" id="ENST00000251363.10">
    <property type="protein sequence ID" value="ENSP00000251363.5"/>
    <property type="gene ID" value="ENSG00000090661.13"/>
</dbReference>
<dbReference type="Ensembl" id="ENST00000559450.6">
    <property type="protein sequence ID" value="ENSP00000453509.1"/>
    <property type="gene ID" value="ENSG00000090661.13"/>
</dbReference>
<dbReference type="GeneID" id="79603"/>
<dbReference type="KEGG" id="hsa:79603"/>
<dbReference type="MANE-Select" id="ENST00000251363.10">
    <property type="protein sequence ID" value="ENSP00000251363.5"/>
    <property type="RefSeq nucleotide sequence ID" value="NM_024552.3"/>
    <property type="RefSeq protein sequence ID" value="NP_078828.2"/>
</dbReference>
<dbReference type="UCSC" id="uc002mjg.4">
    <property type="organism name" value="human"/>
</dbReference>
<dbReference type="AGR" id="HGNC:23747"/>
<dbReference type="CTD" id="79603"/>
<dbReference type="DisGeNET" id="79603"/>
<dbReference type="GeneCards" id="CERS4"/>
<dbReference type="HGNC" id="HGNC:23747">
    <property type="gene designation" value="CERS4"/>
</dbReference>
<dbReference type="HPA" id="ENSG00000090661">
    <property type="expression patterns" value="Low tissue specificity"/>
</dbReference>
<dbReference type="MIM" id="615334">
    <property type="type" value="gene"/>
</dbReference>
<dbReference type="neXtProt" id="NX_Q9HA82"/>
<dbReference type="OpenTargets" id="ENSG00000090661"/>
<dbReference type="PharmGKB" id="PA134915173"/>
<dbReference type="VEuPathDB" id="HostDB:ENSG00000090661"/>
<dbReference type="eggNOG" id="KOG1607">
    <property type="taxonomic scope" value="Eukaryota"/>
</dbReference>
<dbReference type="GeneTree" id="ENSGT01030000234515"/>
<dbReference type="InParanoid" id="Q9HA82"/>
<dbReference type="OMA" id="YYSMELY"/>
<dbReference type="OrthoDB" id="537032at2759"/>
<dbReference type="PAN-GO" id="Q9HA82">
    <property type="GO annotations" value="3 GO annotations based on evolutionary models"/>
</dbReference>
<dbReference type="PhylomeDB" id="Q9HA82"/>
<dbReference type="TreeFam" id="TF314319"/>
<dbReference type="BioCyc" id="MetaCyc:ENSG00000090661-MONOMER"/>
<dbReference type="BRENDA" id="2.3.1.24">
    <property type="organism ID" value="2681"/>
</dbReference>
<dbReference type="BRENDA" id="2.3.1.291">
    <property type="organism ID" value="2681"/>
</dbReference>
<dbReference type="BRENDA" id="2.3.1.297">
    <property type="organism ID" value="2681"/>
</dbReference>
<dbReference type="PathwayCommons" id="Q9HA82"/>
<dbReference type="Reactome" id="R-HSA-1660661">
    <property type="pathway name" value="Sphingolipid de novo biosynthesis"/>
</dbReference>
<dbReference type="SignaLink" id="Q9HA82"/>
<dbReference type="SIGNOR" id="Q9HA82"/>
<dbReference type="UniPathway" id="UPA00222"/>
<dbReference type="BioGRID-ORCS" id="79603">
    <property type="hits" value="31 hits in 1173 CRISPR screens"/>
</dbReference>
<dbReference type="ChiTaRS" id="CERS4">
    <property type="organism name" value="human"/>
</dbReference>
<dbReference type="GenomeRNAi" id="79603"/>
<dbReference type="Pharos" id="Q9HA82">
    <property type="development level" value="Tbio"/>
</dbReference>
<dbReference type="PRO" id="PR:Q9HA82"/>
<dbReference type="Proteomes" id="UP000005640">
    <property type="component" value="Chromosome 19"/>
</dbReference>
<dbReference type="RNAct" id="Q9HA82">
    <property type="molecule type" value="protein"/>
</dbReference>
<dbReference type="Bgee" id="ENSG00000090661">
    <property type="expression patterns" value="Expressed in lower esophagus mucosa and 117 other cell types or tissues"/>
</dbReference>
<dbReference type="ExpressionAtlas" id="Q9HA82">
    <property type="expression patterns" value="baseline and differential"/>
</dbReference>
<dbReference type="GO" id="GO:0005789">
    <property type="term" value="C:endoplasmic reticulum membrane"/>
    <property type="evidence" value="ECO:0000304"/>
    <property type="project" value="Reactome"/>
</dbReference>
<dbReference type="GO" id="GO:0003677">
    <property type="term" value="F:DNA binding"/>
    <property type="evidence" value="ECO:0007669"/>
    <property type="project" value="InterPro"/>
</dbReference>
<dbReference type="GO" id="GO:0050291">
    <property type="term" value="F:sphingosine N-acyltransferase activity"/>
    <property type="evidence" value="ECO:0000314"/>
    <property type="project" value="UniProtKB"/>
</dbReference>
<dbReference type="GO" id="GO:0046513">
    <property type="term" value="P:ceramide biosynthetic process"/>
    <property type="evidence" value="ECO:0000314"/>
    <property type="project" value="UniProtKB"/>
</dbReference>
<dbReference type="GO" id="GO:0030148">
    <property type="term" value="P:sphingolipid biosynthetic process"/>
    <property type="evidence" value="ECO:0000304"/>
    <property type="project" value="Reactome"/>
</dbReference>
<dbReference type="CDD" id="cd00086">
    <property type="entry name" value="homeodomain"/>
    <property type="match status" value="1"/>
</dbReference>
<dbReference type="FunFam" id="1.10.10.60:FF:000020">
    <property type="entry name" value="Ceramide synthase 5"/>
    <property type="match status" value="1"/>
</dbReference>
<dbReference type="Gene3D" id="1.10.10.60">
    <property type="entry name" value="Homeodomain-like"/>
    <property type="match status" value="1"/>
</dbReference>
<dbReference type="InterPro" id="IPR001356">
    <property type="entry name" value="HD"/>
</dbReference>
<dbReference type="InterPro" id="IPR009057">
    <property type="entry name" value="Homeodomain-like_sf"/>
</dbReference>
<dbReference type="InterPro" id="IPR016439">
    <property type="entry name" value="Lag1/Lac1-like"/>
</dbReference>
<dbReference type="InterPro" id="IPR006634">
    <property type="entry name" value="TLC-dom"/>
</dbReference>
<dbReference type="PANTHER" id="PTHR12560:SF6">
    <property type="entry name" value="CERAMIDE SYNTHASE 4"/>
    <property type="match status" value="1"/>
</dbReference>
<dbReference type="PANTHER" id="PTHR12560">
    <property type="entry name" value="LONGEVITY ASSURANCE FACTOR 1 LAG1"/>
    <property type="match status" value="1"/>
</dbReference>
<dbReference type="Pfam" id="PF00046">
    <property type="entry name" value="Homeodomain"/>
    <property type="match status" value="1"/>
</dbReference>
<dbReference type="Pfam" id="PF03798">
    <property type="entry name" value="TRAM_LAG1_CLN8"/>
    <property type="match status" value="1"/>
</dbReference>
<dbReference type="PIRSF" id="PIRSF005225">
    <property type="entry name" value="LAG1_LAC1"/>
    <property type="match status" value="1"/>
</dbReference>
<dbReference type="SMART" id="SM00724">
    <property type="entry name" value="TLC"/>
    <property type="match status" value="1"/>
</dbReference>
<dbReference type="SUPFAM" id="SSF46689">
    <property type="entry name" value="Homeodomain-like"/>
    <property type="match status" value="1"/>
</dbReference>
<dbReference type="PROSITE" id="PS50922">
    <property type="entry name" value="TLC"/>
    <property type="match status" value="1"/>
</dbReference>
<sequence length="394" mass="46399">MLSSFNEWFWQDRFWLPPNVTWTELEDRDGRVYPHPQDLLAALPLALVLLAMRLAFERFIGLPLSRWLGVRDQTRRQVKPNATLEKHFLTEGHRPKEPQLSLLAAQCGLTLQQTQRWFRRRRNQDRPQLTKKFCEASWRFLFYLSSFVGGLSVLYHESWLWAPVMCWDRYPNQTLKPSLYWWYLLELGFYLSLLIRLPFDVKRKDFKEQVIHHFVAVILMTFSYSANLLRIGSLVLLLHDSSDYLLEACKMVNYMQYQQVCDALFLIFSFVFFYTRLVLFPTQILYTTYYESISNRGPFFGYYFFNGLLMLLQLLHVFWSCLILRMLYSFMKKGQMEKDIRSDVEESDSSEEAAAAQEPLQLKNGAAGGPRPAPTDGPRSRVAGRLTNRHTTAT</sequence>
<name>CERS4_HUMAN</name>
<reference key="1">
    <citation type="journal article" date="2004" name="Nat. Genet.">
        <title>Complete sequencing and characterization of 21,243 full-length human cDNAs.</title>
        <authorList>
            <person name="Ota T."/>
            <person name="Suzuki Y."/>
            <person name="Nishikawa T."/>
            <person name="Otsuki T."/>
            <person name="Sugiyama T."/>
            <person name="Irie R."/>
            <person name="Wakamatsu A."/>
            <person name="Hayashi K."/>
            <person name="Sato H."/>
            <person name="Nagai K."/>
            <person name="Kimura K."/>
            <person name="Makita H."/>
            <person name="Sekine M."/>
            <person name="Obayashi M."/>
            <person name="Nishi T."/>
            <person name="Shibahara T."/>
            <person name="Tanaka T."/>
            <person name="Ishii S."/>
            <person name="Yamamoto J."/>
            <person name="Saito K."/>
            <person name="Kawai Y."/>
            <person name="Isono Y."/>
            <person name="Nakamura Y."/>
            <person name="Nagahari K."/>
            <person name="Murakami K."/>
            <person name="Yasuda T."/>
            <person name="Iwayanagi T."/>
            <person name="Wagatsuma M."/>
            <person name="Shiratori A."/>
            <person name="Sudo H."/>
            <person name="Hosoiri T."/>
            <person name="Kaku Y."/>
            <person name="Kodaira H."/>
            <person name="Kondo H."/>
            <person name="Sugawara M."/>
            <person name="Takahashi M."/>
            <person name="Kanda K."/>
            <person name="Yokoi T."/>
            <person name="Furuya T."/>
            <person name="Kikkawa E."/>
            <person name="Omura Y."/>
            <person name="Abe K."/>
            <person name="Kamihara K."/>
            <person name="Katsuta N."/>
            <person name="Sato K."/>
            <person name="Tanikawa M."/>
            <person name="Yamazaki M."/>
            <person name="Ninomiya K."/>
            <person name="Ishibashi T."/>
            <person name="Yamashita H."/>
            <person name="Murakawa K."/>
            <person name="Fujimori K."/>
            <person name="Tanai H."/>
            <person name="Kimata M."/>
            <person name="Watanabe M."/>
            <person name="Hiraoka S."/>
            <person name="Chiba Y."/>
            <person name="Ishida S."/>
            <person name="Ono Y."/>
            <person name="Takiguchi S."/>
            <person name="Watanabe S."/>
            <person name="Yosida M."/>
            <person name="Hotuta T."/>
            <person name="Kusano J."/>
            <person name="Kanehori K."/>
            <person name="Takahashi-Fujii A."/>
            <person name="Hara H."/>
            <person name="Tanase T.-O."/>
            <person name="Nomura Y."/>
            <person name="Togiya S."/>
            <person name="Komai F."/>
            <person name="Hara R."/>
            <person name="Takeuchi K."/>
            <person name="Arita M."/>
            <person name="Imose N."/>
            <person name="Musashino K."/>
            <person name="Yuuki H."/>
            <person name="Oshima A."/>
            <person name="Sasaki N."/>
            <person name="Aotsuka S."/>
            <person name="Yoshikawa Y."/>
            <person name="Matsunawa H."/>
            <person name="Ichihara T."/>
            <person name="Shiohata N."/>
            <person name="Sano S."/>
            <person name="Moriya S."/>
            <person name="Momiyama H."/>
            <person name="Satoh N."/>
            <person name="Takami S."/>
            <person name="Terashima Y."/>
            <person name="Suzuki O."/>
            <person name="Nakagawa S."/>
            <person name="Senoh A."/>
            <person name="Mizoguchi H."/>
            <person name="Goto Y."/>
            <person name="Shimizu F."/>
            <person name="Wakebe H."/>
            <person name="Hishigaki H."/>
            <person name="Watanabe T."/>
            <person name="Sugiyama A."/>
            <person name="Takemoto M."/>
            <person name="Kawakami B."/>
            <person name="Yamazaki M."/>
            <person name="Watanabe K."/>
            <person name="Kumagai A."/>
            <person name="Itakura S."/>
            <person name="Fukuzumi Y."/>
            <person name="Fujimori Y."/>
            <person name="Komiyama M."/>
            <person name="Tashiro H."/>
            <person name="Tanigami A."/>
            <person name="Fujiwara T."/>
            <person name="Ono T."/>
            <person name="Yamada K."/>
            <person name="Fujii Y."/>
            <person name="Ozaki K."/>
            <person name="Hirao M."/>
            <person name="Ohmori Y."/>
            <person name="Kawabata A."/>
            <person name="Hikiji T."/>
            <person name="Kobatake N."/>
            <person name="Inagaki H."/>
            <person name="Ikema Y."/>
            <person name="Okamoto S."/>
            <person name="Okitani R."/>
            <person name="Kawakami T."/>
            <person name="Noguchi S."/>
            <person name="Itoh T."/>
            <person name="Shigeta K."/>
            <person name="Senba T."/>
            <person name="Matsumura K."/>
            <person name="Nakajima Y."/>
            <person name="Mizuno T."/>
            <person name="Morinaga M."/>
            <person name="Sasaki M."/>
            <person name="Togashi T."/>
            <person name="Oyama M."/>
            <person name="Hata H."/>
            <person name="Watanabe M."/>
            <person name="Komatsu T."/>
            <person name="Mizushima-Sugano J."/>
            <person name="Satoh T."/>
            <person name="Shirai Y."/>
            <person name="Takahashi Y."/>
            <person name="Nakagawa K."/>
            <person name="Okumura K."/>
            <person name="Nagase T."/>
            <person name="Nomura N."/>
            <person name="Kikuchi H."/>
            <person name="Masuho Y."/>
            <person name="Yamashita R."/>
            <person name="Nakai K."/>
            <person name="Yada T."/>
            <person name="Nakamura Y."/>
            <person name="Ohara O."/>
            <person name="Isogai T."/>
            <person name="Sugano S."/>
        </authorList>
    </citation>
    <scope>NUCLEOTIDE SEQUENCE [LARGE SCALE MRNA]</scope>
    <scope>VARIANTS VAL-353 AND GLN-379</scope>
    <source>
        <tissue>Embryo</tissue>
    </source>
</reference>
<reference key="2">
    <citation type="journal article" date="2004" name="Nature">
        <title>The DNA sequence and biology of human chromosome 19.</title>
        <authorList>
            <person name="Grimwood J."/>
            <person name="Gordon L.A."/>
            <person name="Olsen A.S."/>
            <person name="Terry A."/>
            <person name="Schmutz J."/>
            <person name="Lamerdin J.E."/>
            <person name="Hellsten U."/>
            <person name="Goodstein D."/>
            <person name="Couronne O."/>
            <person name="Tran-Gyamfi M."/>
            <person name="Aerts A."/>
            <person name="Altherr M."/>
            <person name="Ashworth L."/>
            <person name="Bajorek E."/>
            <person name="Black S."/>
            <person name="Branscomb E."/>
            <person name="Caenepeel S."/>
            <person name="Carrano A.V."/>
            <person name="Caoile C."/>
            <person name="Chan Y.M."/>
            <person name="Christensen M."/>
            <person name="Cleland C.A."/>
            <person name="Copeland A."/>
            <person name="Dalin E."/>
            <person name="Dehal P."/>
            <person name="Denys M."/>
            <person name="Detter J.C."/>
            <person name="Escobar J."/>
            <person name="Flowers D."/>
            <person name="Fotopulos D."/>
            <person name="Garcia C."/>
            <person name="Georgescu A.M."/>
            <person name="Glavina T."/>
            <person name="Gomez M."/>
            <person name="Gonzales E."/>
            <person name="Groza M."/>
            <person name="Hammon N."/>
            <person name="Hawkins T."/>
            <person name="Haydu L."/>
            <person name="Ho I."/>
            <person name="Huang W."/>
            <person name="Israni S."/>
            <person name="Jett J."/>
            <person name="Kadner K."/>
            <person name="Kimball H."/>
            <person name="Kobayashi A."/>
            <person name="Larionov V."/>
            <person name="Leem S.-H."/>
            <person name="Lopez F."/>
            <person name="Lou Y."/>
            <person name="Lowry S."/>
            <person name="Malfatti S."/>
            <person name="Martinez D."/>
            <person name="McCready P.M."/>
            <person name="Medina C."/>
            <person name="Morgan J."/>
            <person name="Nelson K."/>
            <person name="Nolan M."/>
            <person name="Ovcharenko I."/>
            <person name="Pitluck S."/>
            <person name="Pollard M."/>
            <person name="Popkie A.P."/>
            <person name="Predki P."/>
            <person name="Quan G."/>
            <person name="Ramirez L."/>
            <person name="Rash S."/>
            <person name="Retterer J."/>
            <person name="Rodriguez A."/>
            <person name="Rogers S."/>
            <person name="Salamov A."/>
            <person name="Salazar A."/>
            <person name="She X."/>
            <person name="Smith D."/>
            <person name="Slezak T."/>
            <person name="Solovyev V."/>
            <person name="Thayer N."/>
            <person name="Tice H."/>
            <person name="Tsai M."/>
            <person name="Ustaszewska A."/>
            <person name="Vo N."/>
            <person name="Wagner M."/>
            <person name="Wheeler J."/>
            <person name="Wu K."/>
            <person name="Xie G."/>
            <person name="Yang J."/>
            <person name="Dubchak I."/>
            <person name="Furey T.S."/>
            <person name="DeJong P."/>
            <person name="Dickson M."/>
            <person name="Gordon D."/>
            <person name="Eichler E.E."/>
            <person name="Pennacchio L.A."/>
            <person name="Richardson P."/>
            <person name="Stubbs L."/>
            <person name="Rokhsar D.S."/>
            <person name="Myers R.M."/>
            <person name="Rubin E.M."/>
            <person name="Lucas S.M."/>
        </authorList>
    </citation>
    <scope>NUCLEOTIDE SEQUENCE [LARGE SCALE GENOMIC DNA]</scope>
</reference>
<reference key="3">
    <citation type="submission" date="2005-09" db="EMBL/GenBank/DDBJ databases">
        <authorList>
            <person name="Mural R.J."/>
            <person name="Istrail S."/>
            <person name="Sutton G.G."/>
            <person name="Florea L."/>
            <person name="Halpern A.L."/>
            <person name="Mobarry C.M."/>
            <person name="Lippert R."/>
            <person name="Walenz B."/>
            <person name="Shatkay H."/>
            <person name="Dew I."/>
            <person name="Miller J.R."/>
            <person name="Flanigan M.J."/>
            <person name="Edwards N.J."/>
            <person name="Bolanos R."/>
            <person name="Fasulo D."/>
            <person name="Halldorsson B.V."/>
            <person name="Hannenhalli S."/>
            <person name="Turner R."/>
            <person name="Yooseph S."/>
            <person name="Lu F."/>
            <person name="Nusskern D.R."/>
            <person name="Shue B.C."/>
            <person name="Zheng X.H."/>
            <person name="Zhong F."/>
            <person name="Delcher A.L."/>
            <person name="Huson D.H."/>
            <person name="Kravitz S.A."/>
            <person name="Mouchard L."/>
            <person name="Reinert K."/>
            <person name="Remington K.A."/>
            <person name="Clark A.G."/>
            <person name="Waterman M.S."/>
            <person name="Eichler E.E."/>
            <person name="Adams M.D."/>
            <person name="Hunkapiller M.W."/>
            <person name="Myers E.W."/>
            <person name="Venter J.C."/>
        </authorList>
    </citation>
    <scope>NUCLEOTIDE SEQUENCE [LARGE SCALE GENOMIC DNA]</scope>
    <scope>VARIANT THR-366</scope>
</reference>
<reference key="4">
    <citation type="journal article" date="2004" name="Genome Res.">
        <title>The status, quality, and expansion of the NIH full-length cDNA project: the Mammalian Gene Collection (MGC).</title>
        <authorList>
            <consortium name="The MGC Project Team"/>
        </authorList>
    </citation>
    <scope>NUCLEOTIDE SEQUENCE [LARGE SCALE MRNA]</scope>
    <scope>VARIANTS VAL-353 AND GLN-379</scope>
    <source>
        <tissue>Lung</tissue>
    </source>
</reference>
<reference key="5">
    <citation type="journal article" date="2007" name="FEBS Lett.">
        <title>Kinetic characterization of mammalian ceramide synthases: determination of K(m) values towards sphinganine.</title>
        <authorList>
            <person name="Lahiri S."/>
            <person name="Lee H."/>
            <person name="Mesicek J."/>
            <person name="Fuks Z."/>
            <person name="Haimovitz-Friedman A."/>
            <person name="Kolesnick R.N."/>
            <person name="Futerman A.H."/>
        </authorList>
    </citation>
    <scope>FUNCTION</scope>
    <scope>CATALYTIC ACTIVITY</scope>
    <scope>BIOPHYSICOCHEMICAL PROPERTIES</scope>
    <scope>PATHWAY</scope>
</reference>
<reference key="6">
    <citation type="journal article" date="2013" name="J. Biol. Chem.">
        <title>Myristate-derived d16:0 sphingolipids constitute a cardiac sphingolipid pool with distinct synthetic routes and functional properties.</title>
        <authorList>
            <person name="Russo S.B."/>
            <person name="Tidhar R."/>
            <person name="Futerman A.H."/>
            <person name="Cowart L.A."/>
        </authorList>
    </citation>
    <scope>FUNCTION</scope>
    <scope>CATALYTIC ACTIVITY</scope>
    <scope>PATHWAY</scope>
</reference>
<reference key="7">
    <citation type="journal article" date="2014" name="J. Proteomics">
        <title>An enzyme assisted RP-RPLC approach for in-depth analysis of human liver phosphoproteome.</title>
        <authorList>
            <person name="Bian Y."/>
            <person name="Song C."/>
            <person name="Cheng K."/>
            <person name="Dong M."/>
            <person name="Wang F."/>
            <person name="Huang J."/>
            <person name="Sun D."/>
            <person name="Wang L."/>
            <person name="Ye M."/>
            <person name="Zou H."/>
        </authorList>
    </citation>
    <scope>IDENTIFICATION BY MASS SPECTROMETRY [LARGE SCALE ANALYSIS]</scope>
    <source>
        <tissue>Liver</tissue>
    </source>
</reference>
<reference key="8">
    <citation type="journal article" date="2016" name="J. Biol. Chem.">
        <title>Enzyme activities of the ceramide synthases CERS2-6 are regulated by phosphorylation in the C-terminal region.</title>
        <authorList>
            <person name="Sassa T."/>
            <person name="Hirayama T."/>
            <person name="Kihara A."/>
        </authorList>
    </citation>
    <scope>FUNCTION</scope>
    <scope>CATALYTIC ACTIVITY</scope>
    <scope>PATHWAY</scope>
    <scope>PHOSPHORYLATION</scope>
    <scope>GLYCOSYLATION</scope>
    <scope>TOPOLOGY</scope>
    <scope>MUTAGENESIS OF 342-SER--SER-350</scope>
</reference>
<reference key="9">
    <citation type="journal article" date="2018" name="J. Biol. Chem.">
        <title>Eleven residues determine the acyl chain specificity of ceramide synthases.</title>
        <authorList>
            <person name="Tidhar R."/>
            <person name="Zelnik I.D."/>
            <person name="Volpert G."/>
            <person name="Ben-Dor S."/>
            <person name="Kelly S."/>
            <person name="Merrill A.H. Jr."/>
            <person name="Futerman A.H."/>
        </authorList>
    </citation>
    <scope>FUNCTION</scope>
    <scope>CATALYTIC ACTIVITY</scope>
    <scope>PATHWAY</scope>
    <scope>GLYCOSYLATION</scope>
    <scope>MUTAGENESIS OF 291-GLU--GLY-301</scope>
</reference>
<reference key="10">
    <citation type="journal article" date="2020" name="FASEB J.">
        <title>Biosynthesis of the anti-lipid-microdomain sphingoid base 4,14-sphingadiene by the ceramide desaturase FADS3.</title>
        <authorList>
            <person name="Jojima K."/>
            <person name="Edagawa M."/>
            <person name="Sawai M."/>
            <person name="Ohno Y."/>
            <person name="Kihara A."/>
        </authorList>
    </citation>
    <scope>FUNCTION</scope>
    <scope>CATALYTIC ACTIVITY</scope>
</reference>
<protein>
    <recommendedName>
        <fullName evidence="13">Ceramide synthase 4</fullName>
        <shortName evidence="13">CerS4</shortName>
        <ecNumber evidence="7 8 9 10">2.3.1.-</ecNumber>
    </recommendedName>
    <alternativeName>
        <fullName evidence="1">LAG1 longevity assurance homolog 4</fullName>
    </alternativeName>
    <alternativeName>
        <fullName evidence="14">Sphingosine N-acyltransferase CERS4</fullName>
        <ecNumber evidence="1">2.3.1.24</ecNumber>
    </alternativeName>
</protein>
<accession>Q9HA82</accession>
<accession>D6W665</accession>
<keyword id="KW-0256">Endoplasmic reticulum</keyword>
<keyword id="KW-0325">Glycoprotein</keyword>
<keyword id="KW-0444">Lipid biosynthesis</keyword>
<keyword id="KW-0443">Lipid metabolism</keyword>
<keyword id="KW-0472">Membrane</keyword>
<keyword id="KW-0597">Phosphoprotein</keyword>
<keyword id="KW-1267">Proteomics identification</keyword>
<keyword id="KW-1185">Reference proteome</keyword>
<keyword id="KW-0808">Transferase</keyword>
<keyword id="KW-0812">Transmembrane</keyword>
<keyword id="KW-1133">Transmembrane helix</keyword>